<reference key="1">
    <citation type="journal article" date="2006" name="Appl. Environ. Microbiol.">
        <title>Genome sequence of the chemolithoautotrophic nitrite-oxidizing bacterium Nitrobacter winogradskyi Nb-255.</title>
        <authorList>
            <person name="Starkenburg S.R."/>
            <person name="Chain P.S.G."/>
            <person name="Sayavedra-Soto L.A."/>
            <person name="Hauser L."/>
            <person name="Land M.L."/>
            <person name="Larimer F.W."/>
            <person name="Malfatti S.A."/>
            <person name="Klotz M.G."/>
            <person name="Bottomley P.J."/>
            <person name="Arp D.J."/>
            <person name="Hickey W.J."/>
        </authorList>
    </citation>
    <scope>NUCLEOTIDE SEQUENCE [LARGE SCALE GENOMIC DNA]</scope>
    <source>
        <strain>ATCC 25391 / DSM 10237 / CIP 104748 / NCIMB 11846 / Nb-255</strain>
    </source>
</reference>
<comment type="function">
    <text evidence="1">Part of the ABC transporter complex LolCDE involved in the translocation of mature outer membrane-directed lipoproteins, from the inner membrane to the periplasmic chaperone, LolA. Responsible for the formation of the LolA-lipoprotein complex in an ATP-dependent manner.</text>
</comment>
<comment type="subunit">
    <text evidence="1">The complex is composed of two ATP-binding proteins (LolD) and two transmembrane proteins (LolC and LolE).</text>
</comment>
<comment type="subcellular location">
    <subcellularLocation>
        <location evidence="1">Cell inner membrane</location>
        <topology evidence="1">Peripheral membrane protein</topology>
    </subcellularLocation>
</comment>
<comment type="similarity">
    <text evidence="1">Belongs to the ABC transporter superfamily. Lipoprotein translocase (TC 3.A.1.125) family.</text>
</comment>
<organism>
    <name type="scientific">Nitrobacter winogradskyi (strain ATCC 25391 / DSM 10237 / CIP 104748 / NCIMB 11846 / Nb-255)</name>
    <dbReference type="NCBI Taxonomy" id="323098"/>
    <lineage>
        <taxon>Bacteria</taxon>
        <taxon>Pseudomonadati</taxon>
        <taxon>Pseudomonadota</taxon>
        <taxon>Alphaproteobacteria</taxon>
        <taxon>Hyphomicrobiales</taxon>
        <taxon>Nitrobacteraceae</taxon>
        <taxon>Nitrobacter</taxon>
    </lineage>
</organism>
<name>LOLD_NITWN</name>
<accession>Q3SRG8</accession>
<sequence length="232" mass="25529">MEQGKKETPTVYLHDIKREYTQGETRLTILDSTKLALWAGQSVALVAPSGSGKSTLLHIAGLLESPDAGEVYIGGIATSGLSDVERTQIRRTDIGFVYQSHRLLPEFTALENVMLPQMIRGLKRAETVKRAQEILAYLGLEDRVTHRPAELSGGEQQRVAIARAVANAPRVLLADEPTGNLDPQTADHVFNALMQLVKATRVSMLIATHNMELADRMDRRVSLENGHVVELD</sequence>
<gene>
    <name evidence="1" type="primary">lolD</name>
    <name type="ordered locus">Nwi_1863</name>
</gene>
<evidence type="ECO:0000255" key="1">
    <source>
        <dbReference type="HAMAP-Rule" id="MF_01708"/>
    </source>
</evidence>
<feature type="chain" id="PRO_0000272112" description="Lipoprotein-releasing system ATP-binding protein LolD">
    <location>
        <begin position="1"/>
        <end position="232"/>
    </location>
</feature>
<feature type="domain" description="ABC transporter" evidence="1">
    <location>
        <begin position="11"/>
        <end position="231"/>
    </location>
</feature>
<feature type="binding site" evidence="1">
    <location>
        <begin position="47"/>
        <end position="54"/>
    </location>
    <ligand>
        <name>ATP</name>
        <dbReference type="ChEBI" id="CHEBI:30616"/>
    </ligand>
</feature>
<protein>
    <recommendedName>
        <fullName evidence="1">Lipoprotein-releasing system ATP-binding protein LolD</fullName>
        <ecNumber evidence="1">7.6.2.-</ecNumber>
    </recommendedName>
</protein>
<keyword id="KW-0067">ATP-binding</keyword>
<keyword id="KW-0997">Cell inner membrane</keyword>
<keyword id="KW-1003">Cell membrane</keyword>
<keyword id="KW-0472">Membrane</keyword>
<keyword id="KW-0547">Nucleotide-binding</keyword>
<keyword id="KW-1185">Reference proteome</keyword>
<keyword id="KW-1278">Translocase</keyword>
<keyword id="KW-0813">Transport</keyword>
<proteinExistence type="inferred from homology"/>
<dbReference type="EC" id="7.6.2.-" evidence="1"/>
<dbReference type="EMBL" id="CP000115">
    <property type="protein sequence ID" value="ABA05123.1"/>
    <property type="molecule type" value="Genomic_DNA"/>
</dbReference>
<dbReference type="RefSeq" id="WP_011315119.1">
    <property type="nucleotide sequence ID" value="NC_007406.1"/>
</dbReference>
<dbReference type="SMR" id="Q3SRG8"/>
<dbReference type="STRING" id="323098.Nwi_1863"/>
<dbReference type="KEGG" id="nwi:Nwi_1863"/>
<dbReference type="eggNOG" id="COG1136">
    <property type="taxonomic scope" value="Bacteria"/>
</dbReference>
<dbReference type="HOGENOM" id="CLU_000604_1_22_5"/>
<dbReference type="Proteomes" id="UP000002531">
    <property type="component" value="Chromosome"/>
</dbReference>
<dbReference type="GO" id="GO:0005886">
    <property type="term" value="C:plasma membrane"/>
    <property type="evidence" value="ECO:0007669"/>
    <property type="project" value="UniProtKB-SubCell"/>
</dbReference>
<dbReference type="GO" id="GO:0005524">
    <property type="term" value="F:ATP binding"/>
    <property type="evidence" value="ECO:0007669"/>
    <property type="project" value="UniProtKB-KW"/>
</dbReference>
<dbReference type="GO" id="GO:0016887">
    <property type="term" value="F:ATP hydrolysis activity"/>
    <property type="evidence" value="ECO:0007669"/>
    <property type="project" value="InterPro"/>
</dbReference>
<dbReference type="GO" id="GO:0022857">
    <property type="term" value="F:transmembrane transporter activity"/>
    <property type="evidence" value="ECO:0007669"/>
    <property type="project" value="TreeGrafter"/>
</dbReference>
<dbReference type="GO" id="GO:0044874">
    <property type="term" value="P:lipoprotein localization to outer membrane"/>
    <property type="evidence" value="ECO:0007669"/>
    <property type="project" value="TreeGrafter"/>
</dbReference>
<dbReference type="GO" id="GO:0089705">
    <property type="term" value="P:protein localization to outer membrane"/>
    <property type="evidence" value="ECO:0007669"/>
    <property type="project" value="TreeGrafter"/>
</dbReference>
<dbReference type="CDD" id="cd03255">
    <property type="entry name" value="ABC_MJ0796_LolCDE_FtsE"/>
    <property type="match status" value="1"/>
</dbReference>
<dbReference type="FunFam" id="3.40.50.300:FF:000032">
    <property type="entry name" value="Export ABC transporter ATP-binding protein"/>
    <property type="match status" value="1"/>
</dbReference>
<dbReference type="Gene3D" id="3.40.50.300">
    <property type="entry name" value="P-loop containing nucleotide triphosphate hydrolases"/>
    <property type="match status" value="1"/>
</dbReference>
<dbReference type="InterPro" id="IPR003593">
    <property type="entry name" value="AAA+_ATPase"/>
</dbReference>
<dbReference type="InterPro" id="IPR003439">
    <property type="entry name" value="ABC_transporter-like_ATP-bd"/>
</dbReference>
<dbReference type="InterPro" id="IPR017871">
    <property type="entry name" value="ABC_transporter-like_CS"/>
</dbReference>
<dbReference type="InterPro" id="IPR015854">
    <property type="entry name" value="ABC_transpr_LolD-like"/>
</dbReference>
<dbReference type="InterPro" id="IPR017911">
    <property type="entry name" value="MacB-like_ATP-bd"/>
</dbReference>
<dbReference type="InterPro" id="IPR027417">
    <property type="entry name" value="P-loop_NTPase"/>
</dbReference>
<dbReference type="PANTHER" id="PTHR24220">
    <property type="entry name" value="IMPORT ATP-BINDING PROTEIN"/>
    <property type="match status" value="1"/>
</dbReference>
<dbReference type="PANTHER" id="PTHR24220:SF689">
    <property type="entry name" value="LIPOPROTEIN-RELEASING SYSTEM ATP-BINDING PROTEIN LOLD"/>
    <property type="match status" value="1"/>
</dbReference>
<dbReference type="Pfam" id="PF00005">
    <property type="entry name" value="ABC_tran"/>
    <property type="match status" value="1"/>
</dbReference>
<dbReference type="SMART" id="SM00382">
    <property type="entry name" value="AAA"/>
    <property type="match status" value="1"/>
</dbReference>
<dbReference type="SUPFAM" id="SSF52540">
    <property type="entry name" value="P-loop containing nucleoside triphosphate hydrolases"/>
    <property type="match status" value="1"/>
</dbReference>
<dbReference type="PROSITE" id="PS00211">
    <property type="entry name" value="ABC_TRANSPORTER_1"/>
    <property type="match status" value="1"/>
</dbReference>
<dbReference type="PROSITE" id="PS50893">
    <property type="entry name" value="ABC_TRANSPORTER_2"/>
    <property type="match status" value="1"/>
</dbReference>
<dbReference type="PROSITE" id="PS51244">
    <property type="entry name" value="LOLD"/>
    <property type="match status" value="1"/>
</dbReference>